<comment type="function">
    <text evidence="1">Plays a role in virus cell tropism, and may be required for efficient virus replication in macrophages.</text>
</comment>
<comment type="induction">
    <text evidence="2">Expressed in the early phase of the viral replicative cycle.</text>
</comment>
<comment type="similarity">
    <text evidence="2">Belongs to the asfivirus MGF 100 family.</text>
</comment>
<protein>
    <recommendedName>
        <fullName>Protein MGF 100-2L</fullName>
    </recommendedName>
</protein>
<keyword id="KW-0244">Early protein</keyword>
<name>1002L_ASFP4</name>
<organism>
    <name type="scientific">African swine fever virus (isolate Tick/South Africa/Pretoriuskop Pr4/1996)</name>
    <name type="common">ASFV</name>
    <dbReference type="NCBI Taxonomy" id="561443"/>
    <lineage>
        <taxon>Viruses</taxon>
        <taxon>Varidnaviria</taxon>
        <taxon>Bamfordvirae</taxon>
        <taxon>Nucleocytoviricota</taxon>
        <taxon>Pokkesviricetes</taxon>
        <taxon>Asfuvirales</taxon>
        <taxon>Asfarviridae</taxon>
        <taxon>Asfivirus</taxon>
        <taxon>African swine fever virus</taxon>
    </lineage>
</organism>
<accession>P0C9F6</accession>
<evidence type="ECO:0000250" key="1"/>
<evidence type="ECO:0000305" key="2"/>
<organismHost>
    <name type="scientific">Ornithodoros</name>
    <name type="common">relapsing fever ticks</name>
    <dbReference type="NCBI Taxonomy" id="6937"/>
</organismHost>
<organismHost>
    <name type="scientific">Phacochoerus aethiopicus</name>
    <name type="common">Warthog</name>
    <dbReference type="NCBI Taxonomy" id="85517"/>
</organismHost>
<organismHost>
    <name type="scientific">Phacochoerus africanus</name>
    <name type="common">Warthog</name>
    <dbReference type="NCBI Taxonomy" id="41426"/>
</organismHost>
<organismHost>
    <name type="scientific">Potamochoerus larvatus</name>
    <name type="common">Bushpig</name>
    <dbReference type="NCBI Taxonomy" id="273792"/>
</organismHost>
<organismHost>
    <name type="scientific">Sus scrofa</name>
    <name type="common">Pig</name>
    <dbReference type="NCBI Taxonomy" id="9823"/>
</organismHost>
<reference key="1">
    <citation type="submission" date="2003-03" db="EMBL/GenBank/DDBJ databases">
        <title>African swine fever virus genomes.</title>
        <authorList>
            <person name="Kutish G.F."/>
            <person name="Rock D.L."/>
        </authorList>
    </citation>
    <scope>NUCLEOTIDE SEQUENCE [LARGE SCALE GENOMIC DNA]</scope>
</reference>
<proteinExistence type="inferred from homology"/>
<feature type="chain" id="PRO_0000373177" description="Protein MGF 100-2L">
    <location>
        <begin position="1"/>
        <end position="141"/>
    </location>
</feature>
<gene>
    <name type="ordered locus">Pret-163</name>
</gene>
<dbReference type="EMBL" id="AY261363">
    <property type="status" value="NOT_ANNOTATED_CDS"/>
    <property type="molecule type" value="Genomic_DNA"/>
</dbReference>
<dbReference type="SMR" id="P0C9F6"/>
<dbReference type="Proteomes" id="UP000000859">
    <property type="component" value="Segment"/>
</dbReference>
<sequence>MGNKESRYLEMCSEEAWLNIPNIFKCIFIRKLFYNKWLKFQEKKLKKSLKLLSFYHPKKDFVGIRDMLQMAPGGSYFITDNITEEFLMLVVKHPEDGSAEFTKLCLKGSCIVIDGYYYDNLHIFISETPDIYKYPLIRYDR</sequence>